<organism>
    <name type="scientific">Wolbachia pipientis subsp. Culex pipiens (strain wPip)</name>
    <dbReference type="NCBI Taxonomy" id="570417"/>
    <lineage>
        <taxon>Bacteria</taxon>
        <taxon>Pseudomonadati</taxon>
        <taxon>Pseudomonadota</taxon>
        <taxon>Alphaproteobacteria</taxon>
        <taxon>Rickettsiales</taxon>
        <taxon>Anaplasmataceae</taxon>
        <taxon>Wolbachieae</taxon>
        <taxon>Wolbachia</taxon>
    </lineage>
</organism>
<reference key="1">
    <citation type="journal article" date="2008" name="Mol. Biol. Evol.">
        <title>Genome evolution of Wolbachia strain wPip from the Culex pipiens group.</title>
        <authorList>
            <person name="Klasson L."/>
            <person name="Walker T."/>
            <person name="Sebaihia M."/>
            <person name="Sanders M.J."/>
            <person name="Quail M.A."/>
            <person name="Lord A."/>
            <person name="Sanders S."/>
            <person name="Earl J."/>
            <person name="O'Neill S.L."/>
            <person name="Thomson N."/>
            <person name="Sinkins S.P."/>
            <person name="Parkhill J."/>
        </authorList>
    </citation>
    <scope>NUCLEOTIDE SEQUENCE [LARGE SCALE GENOMIC DNA]</scope>
    <source>
        <strain>wPip</strain>
    </source>
</reference>
<dbReference type="EC" id="6.1.1.1" evidence="1"/>
<dbReference type="EMBL" id="AM999887">
    <property type="protein sequence ID" value="CAQ54969.1"/>
    <property type="molecule type" value="Genomic_DNA"/>
</dbReference>
<dbReference type="RefSeq" id="WP_012481931.1">
    <property type="nucleotide sequence ID" value="NC_010981.1"/>
</dbReference>
<dbReference type="SMR" id="B3CM50"/>
<dbReference type="KEGG" id="wpi:WP0861"/>
<dbReference type="eggNOG" id="COG0162">
    <property type="taxonomic scope" value="Bacteria"/>
</dbReference>
<dbReference type="HOGENOM" id="CLU_024003_0_3_5"/>
<dbReference type="Proteomes" id="UP000008814">
    <property type="component" value="Chromosome"/>
</dbReference>
<dbReference type="GO" id="GO:0005829">
    <property type="term" value="C:cytosol"/>
    <property type="evidence" value="ECO:0007669"/>
    <property type="project" value="TreeGrafter"/>
</dbReference>
<dbReference type="GO" id="GO:0005524">
    <property type="term" value="F:ATP binding"/>
    <property type="evidence" value="ECO:0007669"/>
    <property type="project" value="UniProtKB-UniRule"/>
</dbReference>
<dbReference type="GO" id="GO:0003723">
    <property type="term" value="F:RNA binding"/>
    <property type="evidence" value="ECO:0007669"/>
    <property type="project" value="UniProtKB-KW"/>
</dbReference>
<dbReference type="GO" id="GO:0004831">
    <property type="term" value="F:tyrosine-tRNA ligase activity"/>
    <property type="evidence" value="ECO:0007669"/>
    <property type="project" value="UniProtKB-UniRule"/>
</dbReference>
<dbReference type="GO" id="GO:0006437">
    <property type="term" value="P:tyrosyl-tRNA aminoacylation"/>
    <property type="evidence" value="ECO:0007669"/>
    <property type="project" value="UniProtKB-UniRule"/>
</dbReference>
<dbReference type="CDD" id="cd00165">
    <property type="entry name" value="S4"/>
    <property type="match status" value="1"/>
</dbReference>
<dbReference type="CDD" id="cd00805">
    <property type="entry name" value="TyrRS_core"/>
    <property type="match status" value="1"/>
</dbReference>
<dbReference type="FunFam" id="1.10.240.10:FF:000001">
    <property type="entry name" value="Tyrosine--tRNA ligase"/>
    <property type="match status" value="1"/>
</dbReference>
<dbReference type="Gene3D" id="3.40.50.620">
    <property type="entry name" value="HUPs"/>
    <property type="match status" value="1"/>
</dbReference>
<dbReference type="Gene3D" id="3.10.290.10">
    <property type="entry name" value="RNA-binding S4 domain"/>
    <property type="match status" value="1"/>
</dbReference>
<dbReference type="Gene3D" id="1.10.240.10">
    <property type="entry name" value="Tyrosyl-Transfer RNA Synthetase"/>
    <property type="match status" value="1"/>
</dbReference>
<dbReference type="HAMAP" id="MF_02006">
    <property type="entry name" value="Tyr_tRNA_synth_type1"/>
    <property type="match status" value="1"/>
</dbReference>
<dbReference type="InterPro" id="IPR002305">
    <property type="entry name" value="aa-tRNA-synth_Ic"/>
</dbReference>
<dbReference type="InterPro" id="IPR014729">
    <property type="entry name" value="Rossmann-like_a/b/a_fold"/>
</dbReference>
<dbReference type="InterPro" id="IPR036986">
    <property type="entry name" value="S4_RNA-bd_sf"/>
</dbReference>
<dbReference type="InterPro" id="IPR054608">
    <property type="entry name" value="SYY-like_C"/>
</dbReference>
<dbReference type="InterPro" id="IPR002307">
    <property type="entry name" value="Tyr-tRNA-ligase"/>
</dbReference>
<dbReference type="InterPro" id="IPR024088">
    <property type="entry name" value="Tyr-tRNA-ligase_bac-type"/>
</dbReference>
<dbReference type="InterPro" id="IPR024107">
    <property type="entry name" value="Tyr-tRNA-ligase_bac_1"/>
</dbReference>
<dbReference type="NCBIfam" id="TIGR00234">
    <property type="entry name" value="tyrS"/>
    <property type="match status" value="1"/>
</dbReference>
<dbReference type="PANTHER" id="PTHR11766:SF0">
    <property type="entry name" value="TYROSINE--TRNA LIGASE, MITOCHONDRIAL"/>
    <property type="match status" value="1"/>
</dbReference>
<dbReference type="PANTHER" id="PTHR11766">
    <property type="entry name" value="TYROSYL-TRNA SYNTHETASE"/>
    <property type="match status" value="1"/>
</dbReference>
<dbReference type="Pfam" id="PF22421">
    <property type="entry name" value="SYY_C-terminal"/>
    <property type="match status" value="1"/>
</dbReference>
<dbReference type="Pfam" id="PF00579">
    <property type="entry name" value="tRNA-synt_1b"/>
    <property type="match status" value="1"/>
</dbReference>
<dbReference type="PRINTS" id="PR01040">
    <property type="entry name" value="TRNASYNTHTYR"/>
</dbReference>
<dbReference type="SUPFAM" id="SSF55174">
    <property type="entry name" value="Alpha-L RNA-binding motif"/>
    <property type="match status" value="1"/>
</dbReference>
<dbReference type="SUPFAM" id="SSF52374">
    <property type="entry name" value="Nucleotidylyl transferase"/>
    <property type="match status" value="1"/>
</dbReference>
<dbReference type="PROSITE" id="PS50889">
    <property type="entry name" value="S4"/>
    <property type="match status" value="1"/>
</dbReference>
<keyword id="KW-0030">Aminoacyl-tRNA synthetase</keyword>
<keyword id="KW-0067">ATP-binding</keyword>
<keyword id="KW-0963">Cytoplasm</keyword>
<keyword id="KW-0436">Ligase</keyword>
<keyword id="KW-0547">Nucleotide-binding</keyword>
<keyword id="KW-0648">Protein biosynthesis</keyword>
<keyword id="KW-0694">RNA-binding</keyword>
<proteinExistence type="inferred from homology"/>
<name>SYY_WOLPP</name>
<sequence>MKHKSEFLNFIQERGYLYQCTNIDRLDQLLSQDNYIIAYIGFDCTAPSLHIGSLIQIMMLRHLQKFGYKPIVLLGGGTTKIGDPSGKDKARSVLPIEDINQNILGIKKTLEKMISFDYGKTGAIIVNNADWLDNIKYIDFLRDIGTHFSVNRMLGFDSVKIRLDREQNLSFLEFNYMLLQAYDFVELNKKYGCRFQIGGSDQWGNIVNGIELSKKLNLPELFGLTTPLLLNAQGKKMGKTESGAVWLDGSMLNSYDYWQYFRNVDDQDVGRFLRLFTDLPIDEIKKLESLKDQETNEAKKVLATEVTKICHGCKEAELARSAAISAFENEDSSLLSGYTITKEQIANGIPLIDLLYDTGFEPSKGAAKRLIQGNGCKVNDNTINDVNYTINSESFKGQPFIKLSAGKKRHIKILVSEVRK</sequence>
<comment type="function">
    <text evidence="1">Catalyzes the attachment of tyrosine to tRNA(Tyr) in a two-step reaction: tyrosine is first activated by ATP to form Tyr-AMP and then transferred to the acceptor end of tRNA(Tyr).</text>
</comment>
<comment type="catalytic activity">
    <reaction evidence="1">
        <text>tRNA(Tyr) + L-tyrosine + ATP = L-tyrosyl-tRNA(Tyr) + AMP + diphosphate + H(+)</text>
        <dbReference type="Rhea" id="RHEA:10220"/>
        <dbReference type="Rhea" id="RHEA-COMP:9706"/>
        <dbReference type="Rhea" id="RHEA-COMP:9707"/>
        <dbReference type="ChEBI" id="CHEBI:15378"/>
        <dbReference type="ChEBI" id="CHEBI:30616"/>
        <dbReference type="ChEBI" id="CHEBI:33019"/>
        <dbReference type="ChEBI" id="CHEBI:58315"/>
        <dbReference type="ChEBI" id="CHEBI:78442"/>
        <dbReference type="ChEBI" id="CHEBI:78536"/>
        <dbReference type="ChEBI" id="CHEBI:456215"/>
        <dbReference type="EC" id="6.1.1.1"/>
    </reaction>
</comment>
<comment type="subunit">
    <text evidence="1">Homodimer.</text>
</comment>
<comment type="subcellular location">
    <subcellularLocation>
        <location evidence="1">Cytoplasm</location>
    </subcellularLocation>
</comment>
<comment type="similarity">
    <text evidence="1">Belongs to the class-I aminoacyl-tRNA synthetase family. TyrS type 1 subfamily.</text>
</comment>
<feature type="chain" id="PRO_1000189346" description="Tyrosine--tRNA ligase">
    <location>
        <begin position="1"/>
        <end position="420"/>
    </location>
</feature>
<feature type="domain" description="S4 RNA-binding" evidence="1">
    <location>
        <begin position="349"/>
        <end position="414"/>
    </location>
</feature>
<feature type="short sequence motif" description="'HIGH' region">
    <location>
        <begin position="44"/>
        <end position="53"/>
    </location>
</feature>
<feature type="short sequence motif" description="'KMSKS' region">
    <location>
        <begin position="236"/>
        <end position="240"/>
    </location>
</feature>
<feature type="binding site" evidence="1">
    <location>
        <position position="39"/>
    </location>
    <ligand>
        <name>L-tyrosine</name>
        <dbReference type="ChEBI" id="CHEBI:58315"/>
    </ligand>
</feature>
<feature type="binding site" evidence="1">
    <location>
        <position position="176"/>
    </location>
    <ligand>
        <name>L-tyrosine</name>
        <dbReference type="ChEBI" id="CHEBI:58315"/>
    </ligand>
</feature>
<feature type="binding site" evidence="1">
    <location>
        <position position="180"/>
    </location>
    <ligand>
        <name>L-tyrosine</name>
        <dbReference type="ChEBI" id="CHEBI:58315"/>
    </ligand>
</feature>
<feature type="binding site" evidence="1">
    <location>
        <position position="239"/>
    </location>
    <ligand>
        <name>ATP</name>
        <dbReference type="ChEBI" id="CHEBI:30616"/>
    </ligand>
</feature>
<evidence type="ECO:0000255" key="1">
    <source>
        <dbReference type="HAMAP-Rule" id="MF_02006"/>
    </source>
</evidence>
<accession>B3CM50</accession>
<gene>
    <name evidence="1" type="primary">tyrS</name>
    <name type="ordered locus">WP0861</name>
</gene>
<protein>
    <recommendedName>
        <fullName evidence="1">Tyrosine--tRNA ligase</fullName>
        <ecNumber evidence="1">6.1.1.1</ecNumber>
    </recommendedName>
    <alternativeName>
        <fullName evidence="1">Tyrosyl-tRNA synthetase</fullName>
        <shortName evidence="1">TyrRS</shortName>
    </alternativeName>
</protein>